<name>RL11_SYNS3</name>
<protein>
    <recommendedName>
        <fullName evidence="1">Large ribosomal subunit protein uL11</fullName>
    </recommendedName>
    <alternativeName>
        <fullName evidence="2">50S ribosomal protein L11</fullName>
    </alternativeName>
</protein>
<feature type="chain" id="PRO_1000046284" description="Large ribosomal subunit protein uL11">
    <location>
        <begin position="1"/>
        <end position="141"/>
    </location>
</feature>
<keyword id="KW-0488">Methylation</keyword>
<keyword id="KW-1185">Reference proteome</keyword>
<keyword id="KW-0687">Ribonucleoprotein</keyword>
<keyword id="KW-0689">Ribosomal protein</keyword>
<keyword id="KW-0694">RNA-binding</keyword>
<keyword id="KW-0699">rRNA-binding</keyword>
<dbReference type="EMBL" id="CP000435">
    <property type="protein sequence ID" value="ABI45814.1"/>
    <property type="molecule type" value="Genomic_DNA"/>
</dbReference>
<dbReference type="RefSeq" id="WP_011620619.1">
    <property type="nucleotide sequence ID" value="NC_008319.1"/>
</dbReference>
<dbReference type="SMR" id="Q0I6K7"/>
<dbReference type="STRING" id="64471.sync_2727"/>
<dbReference type="KEGG" id="syg:sync_2727"/>
<dbReference type="eggNOG" id="COG0080">
    <property type="taxonomic scope" value="Bacteria"/>
</dbReference>
<dbReference type="HOGENOM" id="CLU_074237_2_1_3"/>
<dbReference type="OrthoDB" id="9802408at2"/>
<dbReference type="Proteomes" id="UP000001961">
    <property type="component" value="Chromosome"/>
</dbReference>
<dbReference type="GO" id="GO:0022625">
    <property type="term" value="C:cytosolic large ribosomal subunit"/>
    <property type="evidence" value="ECO:0007669"/>
    <property type="project" value="TreeGrafter"/>
</dbReference>
<dbReference type="GO" id="GO:0070180">
    <property type="term" value="F:large ribosomal subunit rRNA binding"/>
    <property type="evidence" value="ECO:0007669"/>
    <property type="project" value="UniProtKB-UniRule"/>
</dbReference>
<dbReference type="GO" id="GO:0003735">
    <property type="term" value="F:structural constituent of ribosome"/>
    <property type="evidence" value="ECO:0007669"/>
    <property type="project" value="InterPro"/>
</dbReference>
<dbReference type="GO" id="GO:0006412">
    <property type="term" value="P:translation"/>
    <property type="evidence" value="ECO:0007669"/>
    <property type="project" value="UniProtKB-UniRule"/>
</dbReference>
<dbReference type="CDD" id="cd00349">
    <property type="entry name" value="Ribosomal_L11"/>
    <property type="match status" value="1"/>
</dbReference>
<dbReference type="FunFam" id="1.10.10.250:FF:000001">
    <property type="entry name" value="50S ribosomal protein L11"/>
    <property type="match status" value="1"/>
</dbReference>
<dbReference type="FunFam" id="3.30.1550.10:FF:000001">
    <property type="entry name" value="50S ribosomal protein L11"/>
    <property type="match status" value="1"/>
</dbReference>
<dbReference type="Gene3D" id="1.10.10.250">
    <property type="entry name" value="Ribosomal protein L11, C-terminal domain"/>
    <property type="match status" value="1"/>
</dbReference>
<dbReference type="Gene3D" id="3.30.1550.10">
    <property type="entry name" value="Ribosomal protein L11/L12, N-terminal domain"/>
    <property type="match status" value="1"/>
</dbReference>
<dbReference type="HAMAP" id="MF_00736">
    <property type="entry name" value="Ribosomal_uL11"/>
    <property type="match status" value="1"/>
</dbReference>
<dbReference type="InterPro" id="IPR000911">
    <property type="entry name" value="Ribosomal_uL11"/>
</dbReference>
<dbReference type="InterPro" id="IPR006519">
    <property type="entry name" value="Ribosomal_uL11_bac-typ"/>
</dbReference>
<dbReference type="InterPro" id="IPR020783">
    <property type="entry name" value="Ribosomal_uL11_C"/>
</dbReference>
<dbReference type="InterPro" id="IPR036769">
    <property type="entry name" value="Ribosomal_uL11_C_sf"/>
</dbReference>
<dbReference type="InterPro" id="IPR020785">
    <property type="entry name" value="Ribosomal_uL11_CS"/>
</dbReference>
<dbReference type="InterPro" id="IPR020784">
    <property type="entry name" value="Ribosomal_uL11_N"/>
</dbReference>
<dbReference type="InterPro" id="IPR036796">
    <property type="entry name" value="Ribosomal_uL11_N_sf"/>
</dbReference>
<dbReference type="NCBIfam" id="TIGR01632">
    <property type="entry name" value="L11_bact"/>
    <property type="match status" value="1"/>
</dbReference>
<dbReference type="PANTHER" id="PTHR11661">
    <property type="entry name" value="60S RIBOSOMAL PROTEIN L12"/>
    <property type="match status" value="1"/>
</dbReference>
<dbReference type="PANTHER" id="PTHR11661:SF1">
    <property type="entry name" value="LARGE RIBOSOMAL SUBUNIT PROTEIN UL11M"/>
    <property type="match status" value="1"/>
</dbReference>
<dbReference type="Pfam" id="PF00298">
    <property type="entry name" value="Ribosomal_L11"/>
    <property type="match status" value="1"/>
</dbReference>
<dbReference type="Pfam" id="PF03946">
    <property type="entry name" value="Ribosomal_L11_N"/>
    <property type="match status" value="1"/>
</dbReference>
<dbReference type="SMART" id="SM00649">
    <property type="entry name" value="RL11"/>
    <property type="match status" value="1"/>
</dbReference>
<dbReference type="SUPFAM" id="SSF54747">
    <property type="entry name" value="Ribosomal L11/L12e N-terminal domain"/>
    <property type="match status" value="1"/>
</dbReference>
<dbReference type="SUPFAM" id="SSF46906">
    <property type="entry name" value="Ribosomal protein L11, C-terminal domain"/>
    <property type="match status" value="1"/>
</dbReference>
<dbReference type="PROSITE" id="PS00359">
    <property type="entry name" value="RIBOSOMAL_L11"/>
    <property type="match status" value="1"/>
</dbReference>
<comment type="function">
    <text evidence="1">Forms part of the ribosomal stalk which helps the ribosome interact with GTP-bound translation factors.</text>
</comment>
<comment type="subunit">
    <text evidence="1">Part of the ribosomal stalk of the 50S ribosomal subunit. Interacts with L10 and the large rRNA to form the base of the stalk. L10 forms an elongated spine to which L12 dimers bind in a sequential fashion forming a multimeric L10(L12)X complex.</text>
</comment>
<comment type="PTM">
    <text evidence="1">One or more lysine residues are methylated.</text>
</comment>
<comment type="similarity">
    <text evidence="1">Belongs to the universal ribosomal protein uL11 family.</text>
</comment>
<evidence type="ECO:0000255" key="1">
    <source>
        <dbReference type="HAMAP-Rule" id="MF_00736"/>
    </source>
</evidence>
<evidence type="ECO:0000305" key="2"/>
<reference key="1">
    <citation type="journal article" date="2006" name="Proc. Natl. Acad. Sci. U.S.A.">
        <title>Genome sequence of Synechococcus CC9311: insights into adaptation to a coastal environment.</title>
        <authorList>
            <person name="Palenik B."/>
            <person name="Ren Q."/>
            <person name="Dupont C.L."/>
            <person name="Myers G.S."/>
            <person name="Heidelberg J.F."/>
            <person name="Badger J.H."/>
            <person name="Madupu R."/>
            <person name="Nelson W.C."/>
            <person name="Brinkac L.M."/>
            <person name="Dodson R.J."/>
            <person name="Durkin A.S."/>
            <person name="Daugherty S.C."/>
            <person name="Sullivan S.A."/>
            <person name="Khouri H."/>
            <person name="Mohamoud Y."/>
            <person name="Halpin R."/>
            <person name="Paulsen I.T."/>
        </authorList>
    </citation>
    <scope>NUCLEOTIDE SEQUENCE [LARGE SCALE GENOMIC DNA]</scope>
    <source>
        <strain>CC9311</strain>
    </source>
</reference>
<gene>
    <name evidence="1" type="primary">rplK</name>
    <name evidence="1" type="synonym">rpl11</name>
    <name type="ordered locus">sync_2727</name>
</gene>
<organism>
    <name type="scientific">Synechococcus sp. (strain CC9311)</name>
    <dbReference type="NCBI Taxonomy" id="64471"/>
    <lineage>
        <taxon>Bacteria</taxon>
        <taxon>Bacillati</taxon>
        <taxon>Cyanobacteriota</taxon>
        <taxon>Cyanophyceae</taxon>
        <taxon>Synechococcales</taxon>
        <taxon>Synechococcaceae</taxon>
        <taxon>Synechococcus</taxon>
    </lineage>
</organism>
<sequence length="141" mass="14772">MAKKVVAVIKLALQAGKANPAPPVGPALGQHGVNIMAFCKEYNARTQDKAGYVIPVEISVFEDRSFTFITKTPPASVLITKAAGIQKGSGESAKGSVGSINRSQLEEIAKTKLPDLNCTSVESAMRVIEGTARNMGVAISD</sequence>
<proteinExistence type="inferred from homology"/>
<accession>Q0I6K7</accession>